<name>HUTG_PSEAE</name>
<accession>Q9HU92</accession>
<comment type="function">
    <text evidence="1">Catalyzes the hydrolysis of N-formyl-L-glutamate to formate and L-glutamate (PubMed:16475788). Shows weak activity with N-formyl-L-glutamine (PubMed:16475788).</text>
</comment>
<comment type="catalytic activity">
    <reaction evidence="1">
        <text>N-formyl-L-glutamate + H2O = formate + L-glutamate</text>
        <dbReference type="Rhea" id="RHEA:12476"/>
        <dbReference type="ChEBI" id="CHEBI:15377"/>
        <dbReference type="ChEBI" id="CHEBI:15740"/>
        <dbReference type="ChEBI" id="CHEBI:17684"/>
        <dbReference type="ChEBI" id="CHEBI:29985"/>
        <dbReference type="EC" id="3.5.1.68"/>
    </reaction>
    <physiologicalReaction direction="left-to-right" evidence="1">
        <dbReference type="Rhea" id="RHEA:12477"/>
    </physiologicalReaction>
</comment>
<comment type="biophysicochemical properties">
    <kinetics>
        <KM evidence="1">3.3 mM for N-formyl-L-glutamate</KM>
        <text evidence="1">kcat is 1.01 sec(-1).</text>
    </kinetics>
</comment>
<comment type="pathway">
    <text evidence="1">Amino-acid degradation; L-histidine degradation into L-glutamate; L-glutamate from N-formimidoyl-L-glutamate (deiminase route): step 2/2.</text>
</comment>
<comment type="subunit">
    <text evidence="1">Monomer.</text>
</comment>
<comment type="miscellaneous">
    <text evidence="4">There appear to be two competing pathways for the degradation of N-formimino-L-glutamate in P.aeruginosa: the two-step degradation of N-formimino-L-glutamate to ammonia, formate and L-glutamate (via HutF and HutG), and the direct hydrolysis of the formimino functional group of N-formimino-L-glutamate to produce formamide and L-glutamate (via PA3175).</text>
</comment>
<comment type="similarity">
    <text evidence="3">Belongs to the N-formylglutamate deformylase family.</text>
</comment>
<protein>
    <recommendedName>
        <fullName evidence="3">N-formylglutamate deformylase</fullName>
        <ecNumber evidence="1">3.5.1.68</ecNumber>
    </recommendedName>
    <alternativeName>
        <fullName evidence="2">N-formyl-L-glutamate deformylase</fullName>
    </alternativeName>
</protein>
<proteinExistence type="evidence at protein level"/>
<evidence type="ECO:0000269" key="1">
    <source>
    </source>
</evidence>
<evidence type="ECO:0000303" key="2">
    <source>
    </source>
</evidence>
<evidence type="ECO:0000305" key="3"/>
<evidence type="ECO:0000305" key="4">
    <source>
    </source>
</evidence>
<evidence type="ECO:0000312" key="5">
    <source>
        <dbReference type="EMBL" id="AAG08476.1"/>
    </source>
</evidence>
<gene>
    <name evidence="2" type="primary">hutG</name>
    <name evidence="5" type="ordered locus">PA5091</name>
</gene>
<reference key="1">
    <citation type="journal article" date="2000" name="Nature">
        <title>Complete genome sequence of Pseudomonas aeruginosa PAO1, an opportunistic pathogen.</title>
        <authorList>
            <person name="Stover C.K."/>
            <person name="Pham X.-Q.T."/>
            <person name="Erwin A.L."/>
            <person name="Mizoguchi S.D."/>
            <person name="Warrener P."/>
            <person name="Hickey M.J."/>
            <person name="Brinkman F.S.L."/>
            <person name="Hufnagle W.O."/>
            <person name="Kowalik D.J."/>
            <person name="Lagrou M."/>
            <person name="Garber R.L."/>
            <person name="Goltry L."/>
            <person name="Tolentino E."/>
            <person name="Westbrock-Wadman S."/>
            <person name="Yuan Y."/>
            <person name="Brody L.L."/>
            <person name="Coulter S.N."/>
            <person name="Folger K.R."/>
            <person name="Kas A."/>
            <person name="Larbig K."/>
            <person name="Lim R.M."/>
            <person name="Smith K.A."/>
            <person name="Spencer D.H."/>
            <person name="Wong G.K.-S."/>
            <person name="Wu Z."/>
            <person name="Paulsen I.T."/>
            <person name="Reizer J."/>
            <person name="Saier M.H. Jr."/>
            <person name="Hancock R.E.W."/>
            <person name="Lory S."/>
            <person name="Olson M.V."/>
        </authorList>
    </citation>
    <scope>NUCLEOTIDE SEQUENCE [LARGE SCALE GENOMIC DNA]</scope>
    <source>
        <strain>ATCC 15692 / DSM 22644 / CIP 104116 / JCM 14847 / LMG 12228 / 1C / PRS 101 / PAO1</strain>
    </source>
</reference>
<reference key="2">
    <citation type="journal article" date="2006" name="Biochemistry">
        <title>Annotating enzymes of unknown function: N-formimino-L-glutamate deiminase is a member of the amidohydrolase superfamily.</title>
        <authorList>
            <person name="Marti-Arbona R."/>
            <person name="Xu C."/>
            <person name="Steele S."/>
            <person name="Weeks A."/>
            <person name="Kuty G.F."/>
            <person name="Seibert C.M."/>
            <person name="Raushel F.M."/>
        </authorList>
    </citation>
    <scope>PROTEIN SEQUENCE OF 1-6</scope>
    <scope>FUNCTION</scope>
    <scope>CATALYTIC ACTIVITY</scope>
    <scope>BIOPHYSICOCHEMICAL PROPERTIES</scope>
    <scope>PATHWAY</scope>
    <scope>SUBUNIT</scope>
</reference>
<keyword id="KW-0903">Direct protein sequencing</keyword>
<keyword id="KW-0369">Histidine metabolism</keyword>
<keyword id="KW-0378">Hydrolase</keyword>
<keyword id="KW-1185">Reference proteome</keyword>
<dbReference type="EC" id="3.5.1.68" evidence="1"/>
<dbReference type="EMBL" id="AE004091">
    <property type="protein sequence ID" value="AAG08476.1"/>
    <property type="molecule type" value="Genomic_DNA"/>
</dbReference>
<dbReference type="PIR" id="H83008">
    <property type="entry name" value="H83008"/>
</dbReference>
<dbReference type="RefSeq" id="NP_253778.1">
    <property type="nucleotide sequence ID" value="NC_002516.2"/>
</dbReference>
<dbReference type="RefSeq" id="WP_003095940.1">
    <property type="nucleotide sequence ID" value="NZ_QZGE01000002.1"/>
</dbReference>
<dbReference type="SMR" id="Q9HU92"/>
<dbReference type="STRING" id="208964.PA5091"/>
<dbReference type="PaxDb" id="208964-PA5091"/>
<dbReference type="DNASU" id="882229"/>
<dbReference type="GeneID" id="882229"/>
<dbReference type="KEGG" id="pae:PA5091"/>
<dbReference type="PATRIC" id="fig|208964.12.peg.5336"/>
<dbReference type="PseudoCAP" id="PA5091"/>
<dbReference type="HOGENOM" id="CLU_069318_0_0_6"/>
<dbReference type="InParanoid" id="Q9HU92"/>
<dbReference type="OrthoDB" id="8716700at2"/>
<dbReference type="PhylomeDB" id="Q9HU92"/>
<dbReference type="BioCyc" id="PAER208964:G1FZ6-5206-MONOMER"/>
<dbReference type="UniPathway" id="UPA00379">
    <property type="reaction ID" value="UER00554"/>
</dbReference>
<dbReference type="Proteomes" id="UP000002438">
    <property type="component" value="Chromosome"/>
</dbReference>
<dbReference type="GO" id="GO:0050129">
    <property type="term" value="F:N-formylglutamate deformylase activity"/>
    <property type="evidence" value="ECO:0000314"/>
    <property type="project" value="PseudoCAP"/>
</dbReference>
<dbReference type="GO" id="GO:0006548">
    <property type="term" value="P:L-histidine catabolic process"/>
    <property type="evidence" value="ECO:0000315"/>
    <property type="project" value="PseudoCAP"/>
</dbReference>
<dbReference type="GO" id="GO:0019556">
    <property type="term" value="P:L-histidine catabolic process to glutamate and formamide"/>
    <property type="evidence" value="ECO:0007669"/>
    <property type="project" value="UniProtKB-UniPathway"/>
</dbReference>
<dbReference type="GO" id="GO:0019557">
    <property type="term" value="P:L-histidine catabolic process to glutamate and formate"/>
    <property type="evidence" value="ECO:0007669"/>
    <property type="project" value="UniProtKB-UniPathway"/>
</dbReference>
<dbReference type="FunFam" id="3.40.630.40:FF:000014">
    <property type="entry name" value="N-formylglutamate amidohydrolase"/>
    <property type="match status" value="1"/>
</dbReference>
<dbReference type="Gene3D" id="3.40.630.40">
    <property type="entry name" value="Zn-dependent exopeptidases"/>
    <property type="match status" value="1"/>
</dbReference>
<dbReference type="InterPro" id="IPR010247">
    <property type="entry name" value="HutG_amidohyd"/>
</dbReference>
<dbReference type="InterPro" id="IPR007709">
    <property type="entry name" value="N-FG_amidohydro"/>
</dbReference>
<dbReference type="NCBIfam" id="TIGR02017">
    <property type="entry name" value="hutG_amidohyd"/>
    <property type="match status" value="1"/>
</dbReference>
<dbReference type="Pfam" id="PF05013">
    <property type="entry name" value="FGase"/>
    <property type="match status" value="1"/>
</dbReference>
<dbReference type="SUPFAM" id="SSF53187">
    <property type="entry name" value="Zn-dependent exopeptidases"/>
    <property type="match status" value="1"/>
</dbReference>
<feature type="chain" id="PRO_0000456687" description="N-formylglutamate deformylase">
    <location>
        <begin position="1"/>
        <end position="266"/>
    </location>
</feature>
<organism>
    <name type="scientific">Pseudomonas aeruginosa (strain ATCC 15692 / DSM 22644 / CIP 104116 / JCM 14847 / LMG 12228 / 1C / PRS 101 / PAO1)</name>
    <dbReference type="NCBI Taxonomy" id="208964"/>
    <lineage>
        <taxon>Bacteria</taxon>
        <taxon>Pseudomonadati</taxon>
        <taxon>Pseudomonadota</taxon>
        <taxon>Gammaproteobacteria</taxon>
        <taxon>Pseudomonadales</taxon>
        <taxon>Pseudomonadaceae</taxon>
        <taxon>Pseudomonas</taxon>
    </lineage>
</organism>
<sequence length="266" mass="29824">MDEVLSFKRGRVPLLISMPHPGTRLTPAVDAGLVEEARALTDTDWHIPRLYDFAEELGASTLAAHYSRYVVDLNRPSDDKPLYSTATTGLYPDTLFDGRPLYREGMAPSAEERMRYLAEVWTPYHRTIAEELARLKAEFGYALLWDAHSIRSHVPHLFDGRLPDFNLGTNAGASCDPALAARLEAVCAAAEGYSHVLNGRFKGGHITRHYGQPEQHVHAVQLELAQCTYMDEQAPFAYRADLAEATRAVIRELLESLLAWGRERYA</sequence>